<protein>
    <recommendedName>
        <fullName evidence="4">Neurotrophic factor BDNF precursor form</fullName>
        <shortName>proBDNF</shortName>
    </recommendedName>
    <alternativeName>
        <fullName>Brain-derived neurotrophic factor</fullName>
    </alternativeName>
    <component>
        <recommendedName>
            <fullName>Neurotrophic factor BDNF</fullName>
        </recommendedName>
    </component>
</protein>
<comment type="function">
    <text evidence="1 2">Important signaling molecule that activates signaling cascades downstream of NTRK2 (By similarity). During development, promotes the survival and differentiation of selected neuronal populations of the peripheral and central nervous systems. Participates in axonal growth, pathfinding and in the modulation of dendritic growth and morphology. Major regulator of synaptic transmission and plasticity at adult synapses in many regions of the CNS. The versatility of BDNF is emphasized by its contribution to a range of adaptive neuronal responses including long-term potentiation (LTP), long-term depression (LTD), certain forms of short-term synaptic plasticity, as well as homeostatic regulation of intrinsic neuronal excitability (By similarity).</text>
</comment>
<comment type="function">
    <molecule>Neurotrophic factor BDNF precursor form</molecule>
    <text evidence="1">Important signaling molecule that activates signaling cascades downstream of NTRK2. Activates signaling cascades via the heterodimeric receptor formed by NGFR and SORCS2. Signaling via NGFR and SORCS2 plays a role in synaptic plasticity and long-term depression (LTD). Binding to NGFR and SORCS2 promotes neuronal apoptosis. Promotes neuronal growth cone collapse.</text>
</comment>
<comment type="subunit">
    <text evidence="1 2">Monomers and homodimers (By similarity). Binds to NTRK2/TRKB. Can form heterodimers with other neurotrophin family members, such as NTF3 and NTF4 (in vitro), but the physiological relevance of this is not clear (By similarity). BDNF precursor form: interacts with the heterodimer formed by NGFR and SORCS2. Mature BDNF has much lower affinity for the heterodimer formed by NGFR and SORCS2 (By similarity).</text>
</comment>
<comment type="subcellular location">
    <subcellularLocation>
        <location evidence="2">Secreted</location>
    </subcellularLocation>
</comment>
<comment type="subcellular location">
    <molecule>Neurotrophic factor BDNF precursor form</molecule>
    <subcellularLocation>
        <location evidence="2">Secreted</location>
    </subcellularLocation>
    <text evidence="2">A proportion of BDNF is secreted as immature precursor (proBDNF).</text>
</comment>
<comment type="PTM">
    <molecule>Neurotrophic factor BDNF precursor form</molecule>
    <text evidence="2">N-glycosylated and glycosulfated, contrary to mature BDNF.</text>
</comment>
<comment type="PTM">
    <text evidence="2">Mature BDNF is produced by proteolytic removal of the propeptide, catalyzed by a FURIN family member. In addition, the precursor form is proteolytically cleaved within the propeptide, but this is not an obligatory intermediate for the production of mature BDNF. Can be converted into mature BDNF by plasmin (PLG).</text>
</comment>
<comment type="similarity">
    <text evidence="4">Belongs to the NGF-beta family.</text>
</comment>
<accession>Q3SAT7</accession>
<dbReference type="EMBL" id="DQ093584">
    <property type="protein sequence ID" value="AAY87409.1"/>
    <property type="molecule type" value="Genomic_DNA"/>
</dbReference>
<dbReference type="SMR" id="Q3SAT7"/>
<dbReference type="GlyCosmos" id="Q3SAT7">
    <property type="glycosylation" value="1 site, No reported glycans"/>
</dbReference>
<dbReference type="GO" id="GO:0030424">
    <property type="term" value="C:axon"/>
    <property type="evidence" value="ECO:0007669"/>
    <property type="project" value="TreeGrafter"/>
</dbReference>
<dbReference type="GO" id="GO:0030425">
    <property type="term" value="C:dendrite"/>
    <property type="evidence" value="ECO:0007669"/>
    <property type="project" value="TreeGrafter"/>
</dbReference>
<dbReference type="GO" id="GO:0005615">
    <property type="term" value="C:extracellular space"/>
    <property type="evidence" value="ECO:0007669"/>
    <property type="project" value="TreeGrafter"/>
</dbReference>
<dbReference type="GO" id="GO:0008021">
    <property type="term" value="C:synaptic vesicle"/>
    <property type="evidence" value="ECO:0007669"/>
    <property type="project" value="TreeGrafter"/>
</dbReference>
<dbReference type="GO" id="GO:0008083">
    <property type="term" value="F:growth factor activity"/>
    <property type="evidence" value="ECO:0007669"/>
    <property type="project" value="UniProtKB-KW"/>
</dbReference>
<dbReference type="GO" id="GO:0005163">
    <property type="term" value="F:nerve growth factor receptor binding"/>
    <property type="evidence" value="ECO:0007669"/>
    <property type="project" value="TreeGrafter"/>
</dbReference>
<dbReference type="GO" id="GO:0007169">
    <property type="term" value="P:cell surface receptor protein tyrosine kinase signaling pathway"/>
    <property type="evidence" value="ECO:0007669"/>
    <property type="project" value="TreeGrafter"/>
</dbReference>
<dbReference type="GO" id="GO:0050804">
    <property type="term" value="P:modulation of chemical synaptic transmission"/>
    <property type="evidence" value="ECO:0007669"/>
    <property type="project" value="TreeGrafter"/>
</dbReference>
<dbReference type="GO" id="GO:0043524">
    <property type="term" value="P:negative regulation of neuron apoptotic process"/>
    <property type="evidence" value="ECO:0007669"/>
    <property type="project" value="TreeGrafter"/>
</dbReference>
<dbReference type="GO" id="GO:0021675">
    <property type="term" value="P:nerve development"/>
    <property type="evidence" value="ECO:0007669"/>
    <property type="project" value="TreeGrafter"/>
</dbReference>
<dbReference type="GO" id="GO:0038180">
    <property type="term" value="P:nerve growth factor signaling pathway"/>
    <property type="evidence" value="ECO:0007669"/>
    <property type="project" value="TreeGrafter"/>
</dbReference>
<dbReference type="GO" id="GO:0048812">
    <property type="term" value="P:neuron projection morphogenesis"/>
    <property type="evidence" value="ECO:0007669"/>
    <property type="project" value="TreeGrafter"/>
</dbReference>
<dbReference type="FunFam" id="2.10.90.10:FF:000002">
    <property type="entry name" value="Brain-derived neurotrophic factor"/>
    <property type="match status" value="1"/>
</dbReference>
<dbReference type="Gene3D" id="2.10.90.10">
    <property type="entry name" value="Cystine-knot cytokines"/>
    <property type="match status" value="1"/>
</dbReference>
<dbReference type="InterPro" id="IPR020430">
    <property type="entry name" value="Brain-der_neurotrophic_factor"/>
</dbReference>
<dbReference type="InterPro" id="IPR029034">
    <property type="entry name" value="Cystine-knot_cytokine"/>
</dbReference>
<dbReference type="InterPro" id="IPR020408">
    <property type="entry name" value="Nerve_growth_factor-like"/>
</dbReference>
<dbReference type="InterPro" id="IPR002072">
    <property type="entry name" value="Nerve_growth_factor-rel"/>
</dbReference>
<dbReference type="InterPro" id="IPR019846">
    <property type="entry name" value="Nerve_growth_factor_CS"/>
</dbReference>
<dbReference type="PANTHER" id="PTHR11589:SF3">
    <property type="entry name" value="BRAIN-DERIVED NEUROTROPHIC FACTOR"/>
    <property type="match status" value="1"/>
</dbReference>
<dbReference type="PANTHER" id="PTHR11589">
    <property type="entry name" value="NERVE GROWTH FACTOR NGF -RELATED"/>
    <property type="match status" value="1"/>
</dbReference>
<dbReference type="Pfam" id="PF00243">
    <property type="entry name" value="NGF"/>
    <property type="match status" value="1"/>
</dbReference>
<dbReference type="PIRSF" id="PIRSF001789">
    <property type="entry name" value="NGF"/>
    <property type="match status" value="1"/>
</dbReference>
<dbReference type="PRINTS" id="PR01912">
    <property type="entry name" value="BDNFACTOR"/>
</dbReference>
<dbReference type="PRINTS" id="PR00268">
    <property type="entry name" value="NGF"/>
</dbReference>
<dbReference type="SMART" id="SM00140">
    <property type="entry name" value="NGF"/>
    <property type="match status" value="1"/>
</dbReference>
<dbReference type="SUPFAM" id="SSF57501">
    <property type="entry name" value="Cystine-knot cytokines"/>
    <property type="match status" value="1"/>
</dbReference>
<dbReference type="PROSITE" id="PS00248">
    <property type="entry name" value="NGF_1"/>
    <property type="match status" value="1"/>
</dbReference>
<dbReference type="PROSITE" id="PS50270">
    <property type="entry name" value="NGF_2"/>
    <property type="match status" value="1"/>
</dbReference>
<reference key="1">
    <citation type="submission" date="2005-06" db="EMBL/GenBank/DDBJ databases">
        <title>Analysis the coding region sequence of brain-derived neurotrophic factor (BDNF) gene of Selenarctos thibetanus through non-invasive sampling.</title>
        <authorList>
            <person name="Zhang Z."/>
        </authorList>
    </citation>
    <scope>NUCLEOTIDE SEQUENCE [GENOMIC DNA]</scope>
</reference>
<gene>
    <name type="primary">BDNF</name>
</gene>
<organism>
    <name type="scientific">Ursus thibetanus</name>
    <name type="common">Asiatic black bear</name>
    <name type="synonym">Selenarctos thibetanus</name>
    <dbReference type="NCBI Taxonomy" id="9642"/>
    <lineage>
        <taxon>Eukaryota</taxon>
        <taxon>Metazoa</taxon>
        <taxon>Chordata</taxon>
        <taxon>Craniata</taxon>
        <taxon>Vertebrata</taxon>
        <taxon>Euteleostomi</taxon>
        <taxon>Mammalia</taxon>
        <taxon>Eutheria</taxon>
        <taxon>Laurasiatheria</taxon>
        <taxon>Carnivora</taxon>
        <taxon>Caniformia</taxon>
        <taxon>Ursidae</taxon>
        <taxon>Ursus</taxon>
    </lineage>
</organism>
<sequence length="247" mass="27807">MTILFLTMVISYFGCMKAAPMKEANVRGQGSLAYPGVRTHGTLESVNGPKAGSRGLTSLADTFEHVIEELLDEDQKVRPSEENNKDADLYTSRVMLSSQVPLEPPLLFLLEEYKNYLDAANMSMRVRRHSDPARRGELSVCDSISEWVTAADKKTAVDMSGGTVTVLEKVPVSKGQLKQYFYETKCNPMGYTKEGCRGIDKRHWNSQCRTTQSYVRALTMDSKKRIGWRFIRIDTSCVCTLTIKRGR</sequence>
<keyword id="KW-0165">Cleavage on pair of basic residues</keyword>
<keyword id="KW-1015">Disulfide bond</keyword>
<keyword id="KW-0325">Glycoprotein</keyword>
<keyword id="KW-0339">Growth factor</keyword>
<keyword id="KW-0964">Secreted</keyword>
<keyword id="KW-0732">Signal</keyword>
<evidence type="ECO:0000250" key="1">
    <source>
        <dbReference type="UniProtKB" id="P21237"/>
    </source>
</evidence>
<evidence type="ECO:0000250" key="2">
    <source>
        <dbReference type="UniProtKB" id="P23560"/>
    </source>
</evidence>
<evidence type="ECO:0000255" key="3"/>
<evidence type="ECO:0000305" key="4"/>
<proteinExistence type="inferred from homology"/>
<name>BDNF_URSTH</name>
<feature type="signal peptide" evidence="3">
    <location>
        <begin position="1"/>
        <end position="18"/>
    </location>
</feature>
<feature type="chain" id="PRO_0000447541" description="Neurotrophic factor BDNF precursor form">
    <location>
        <begin position="19"/>
        <end position="247"/>
    </location>
</feature>
<feature type="propeptide" id="PRO_0000042900" evidence="1">
    <location>
        <begin position="19"/>
        <end position="128"/>
    </location>
</feature>
<feature type="chain" id="PRO_0000042901" description="Neurotrophic factor BDNF">
    <location>
        <begin position="129"/>
        <end position="247"/>
    </location>
</feature>
<feature type="site" description="Cleavage; by MBTPS1" evidence="2">
    <location>
        <begin position="57"/>
        <end position="58"/>
    </location>
</feature>
<feature type="glycosylation site" description="N-linked (GlcNAc...) asparagine" evidence="3">
    <location>
        <position position="121"/>
    </location>
</feature>
<feature type="disulfide bond" evidence="2">
    <location>
        <begin position="141"/>
        <end position="208"/>
    </location>
</feature>
<feature type="disulfide bond" evidence="2">
    <location>
        <begin position="186"/>
        <end position="237"/>
    </location>
</feature>
<feature type="disulfide bond" evidence="2">
    <location>
        <begin position="196"/>
        <end position="239"/>
    </location>
</feature>